<feature type="chain" id="PRO_1000204837" description="Phenylalanine--tRNA ligase alpha subunit">
    <location>
        <begin position="1"/>
        <end position="329"/>
    </location>
</feature>
<feature type="binding site" evidence="1">
    <location>
        <position position="253"/>
    </location>
    <ligand>
        <name>Mg(2+)</name>
        <dbReference type="ChEBI" id="CHEBI:18420"/>
        <note>shared with beta subunit</note>
    </ligand>
</feature>
<protein>
    <recommendedName>
        <fullName evidence="1">Phenylalanine--tRNA ligase alpha subunit</fullName>
        <ecNumber evidence="1">6.1.1.20</ecNumber>
    </recommendedName>
    <alternativeName>
        <fullName evidence="1">Phenylalanyl-tRNA synthetase alpha subunit</fullName>
        <shortName evidence="1">PheRS</shortName>
    </alternativeName>
</protein>
<accession>C5BSQ6</accession>
<reference key="1">
    <citation type="journal article" date="2009" name="PLoS ONE">
        <title>The complete genome of Teredinibacter turnerae T7901: an intracellular endosymbiont of marine wood-boring bivalves (shipworms).</title>
        <authorList>
            <person name="Yang J.C."/>
            <person name="Madupu R."/>
            <person name="Durkin A.S."/>
            <person name="Ekborg N.A."/>
            <person name="Pedamallu C.S."/>
            <person name="Hostetler J.B."/>
            <person name="Radune D."/>
            <person name="Toms B.S."/>
            <person name="Henrissat B."/>
            <person name="Coutinho P.M."/>
            <person name="Schwarz S."/>
            <person name="Field L."/>
            <person name="Trindade-Silva A.E."/>
            <person name="Soares C.A.G."/>
            <person name="Elshahawi S."/>
            <person name="Hanora A."/>
            <person name="Schmidt E.W."/>
            <person name="Haygood M.G."/>
            <person name="Posfai J."/>
            <person name="Benner J."/>
            <person name="Madinger C."/>
            <person name="Nove J."/>
            <person name="Anton B."/>
            <person name="Chaudhary K."/>
            <person name="Foster J."/>
            <person name="Holman A."/>
            <person name="Kumar S."/>
            <person name="Lessard P.A."/>
            <person name="Luyten Y.A."/>
            <person name="Slatko B."/>
            <person name="Wood N."/>
            <person name="Wu B."/>
            <person name="Teplitski M."/>
            <person name="Mougous J.D."/>
            <person name="Ward N."/>
            <person name="Eisen J.A."/>
            <person name="Badger J.H."/>
            <person name="Distel D.L."/>
        </authorList>
    </citation>
    <scope>NUCLEOTIDE SEQUENCE [LARGE SCALE GENOMIC DNA]</scope>
    <source>
        <strain>ATCC 39867 / T7901</strain>
    </source>
</reference>
<dbReference type="EC" id="6.1.1.20" evidence="1"/>
<dbReference type="EMBL" id="CP001614">
    <property type="protein sequence ID" value="ACR12572.1"/>
    <property type="molecule type" value="Genomic_DNA"/>
</dbReference>
<dbReference type="RefSeq" id="WP_015818684.1">
    <property type="nucleotide sequence ID" value="NC_012997.1"/>
</dbReference>
<dbReference type="SMR" id="C5BSQ6"/>
<dbReference type="STRING" id="377629.TERTU_1459"/>
<dbReference type="KEGG" id="ttu:TERTU_1459"/>
<dbReference type="eggNOG" id="COG0016">
    <property type="taxonomic scope" value="Bacteria"/>
</dbReference>
<dbReference type="HOGENOM" id="CLU_025086_0_1_6"/>
<dbReference type="OrthoDB" id="9800719at2"/>
<dbReference type="Proteomes" id="UP000009080">
    <property type="component" value="Chromosome"/>
</dbReference>
<dbReference type="GO" id="GO:0005737">
    <property type="term" value="C:cytoplasm"/>
    <property type="evidence" value="ECO:0007669"/>
    <property type="project" value="UniProtKB-SubCell"/>
</dbReference>
<dbReference type="GO" id="GO:0005524">
    <property type="term" value="F:ATP binding"/>
    <property type="evidence" value="ECO:0007669"/>
    <property type="project" value="UniProtKB-UniRule"/>
</dbReference>
<dbReference type="GO" id="GO:0000287">
    <property type="term" value="F:magnesium ion binding"/>
    <property type="evidence" value="ECO:0007669"/>
    <property type="project" value="UniProtKB-UniRule"/>
</dbReference>
<dbReference type="GO" id="GO:0004826">
    <property type="term" value="F:phenylalanine-tRNA ligase activity"/>
    <property type="evidence" value="ECO:0007669"/>
    <property type="project" value="UniProtKB-UniRule"/>
</dbReference>
<dbReference type="GO" id="GO:0000049">
    <property type="term" value="F:tRNA binding"/>
    <property type="evidence" value="ECO:0007669"/>
    <property type="project" value="InterPro"/>
</dbReference>
<dbReference type="GO" id="GO:0006432">
    <property type="term" value="P:phenylalanyl-tRNA aminoacylation"/>
    <property type="evidence" value="ECO:0007669"/>
    <property type="project" value="UniProtKB-UniRule"/>
</dbReference>
<dbReference type="CDD" id="cd00496">
    <property type="entry name" value="PheRS_alpha_core"/>
    <property type="match status" value="1"/>
</dbReference>
<dbReference type="FunFam" id="3.30.930.10:FF:000003">
    <property type="entry name" value="Phenylalanine--tRNA ligase alpha subunit"/>
    <property type="match status" value="1"/>
</dbReference>
<dbReference type="Gene3D" id="3.30.930.10">
    <property type="entry name" value="Bira Bifunctional Protein, Domain 2"/>
    <property type="match status" value="1"/>
</dbReference>
<dbReference type="HAMAP" id="MF_00281">
    <property type="entry name" value="Phe_tRNA_synth_alpha1"/>
    <property type="match status" value="1"/>
</dbReference>
<dbReference type="InterPro" id="IPR006195">
    <property type="entry name" value="aa-tRNA-synth_II"/>
</dbReference>
<dbReference type="InterPro" id="IPR045864">
    <property type="entry name" value="aa-tRNA-synth_II/BPL/LPL"/>
</dbReference>
<dbReference type="InterPro" id="IPR004529">
    <property type="entry name" value="Phe-tRNA-synth_IIc_asu"/>
</dbReference>
<dbReference type="InterPro" id="IPR004188">
    <property type="entry name" value="Phe-tRNA_ligase_II_N"/>
</dbReference>
<dbReference type="InterPro" id="IPR022911">
    <property type="entry name" value="Phe_tRNA_ligase_alpha1_bac"/>
</dbReference>
<dbReference type="InterPro" id="IPR002319">
    <property type="entry name" value="Phenylalanyl-tRNA_Synthase"/>
</dbReference>
<dbReference type="InterPro" id="IPR010978">
    <property type="entry name" value="tRNA-bd_arm"/>
</dbReference>
<dbReference type="NCBIfam" id="TIGR00468">
    <property type="entry name" value="pheS"/>
    <property type="match status" value="1"/>
</dbReference>
<dbReference type="PANTHER" id="PTHR11538:SF41">
    <property type="entry name" value="PHENYLALANINE--TRNA LIGASE, MITOCHONDRIAL"/>
    <property type="match status" value="1"/>
</dbReference>
<dbReference type="PANTHER" id="PTHR11538">
    <property type="entry name" value="PHENYLALANYL-TRNA SYNTHETASE"/>
    <property type="match status" value="1"/>
</dbReference>
<dbReference type="Pfam" id="PF02912">
    <property type="entry name" value="Phe_tRNA-synt_N"/>
    <property type="match status" value="1"/>
</dbReference>
<dbReference type="Pfam" id="PF01409">
    <property type="entry name" value="tRNA-synt_2d"/>
    <property type="match status" value="1"/>
</dbReference>
<dbReference type="SUPFAM" id="SSF55681">
    <property type="entry name" value="Class II aaRS and biotin synthetases"/>
    <property type="match status" value="1"/>
</dbReference>
<dbReference type="SUPFAM" id="SSF46589">
    <property type="entry name" value="tRNA-binding arm"/>
    <property type="match status" value="1"/>
</dbReference>
<dbReference type="PROSITE" id="PS50862">
    <property type="entry name" value="AA_TRNA_LIGASE_II"/>
    <property type="match status" value="1"/>
</dbReference>
<organism>
    <name type="scientific">Teredinibacter turnerae (strain ATCC 39867 / T7901)</name>
    <dbReference type="NCBI Taxonomy" id="377629"/>
    <lineage>
        <taxon>Bacteria</taxon>
        <taxon>Pseudomonadati</taxon>
        <taxon>Pseudomonadota</taxon>
        <taxon>Gammaproteobacteria</taxon>
        <taxon>Cellvibrionales</taxon>
        <taxon>Cellvibrionaceae</taxon>
        <taxon>Teredinibacter</taxon>
    </lineage>
</organism>
<proteinExistence type="inferred from homology"/>
<sequence length="329" mass="37111">MENLEALTEEAIELVNCANDLAALDTVRVNYLGKKGPLTALRKTLGKLSAEERPVVGAKINEAVARVQEQLNQKKAALELAAINTKLASETIDVTLEGRRNEVGGLHPVTRTLDRIERIFSNVGYKVEQGPEIEDNYHNFDALNIPAHHPARAMHDTFYVDEDRVLRTHTSPVQVRTMENQQPPIYIICPGRVYRCDSDQTHTPMFHQVEGLVVDKNVSFADLKGTIVDFLRVFFEKDDLEVRFRPSFFPFTEPSAEFDIQWASSKTGWLEVGGCGMVHPNVLRASGVDPEVYTGFAFGLGVERLAMLRYGVNDLRLFFENDLDFLKQF</sequence>
<comment type="catalytic activity">
    <reaction evidence="1">
        <text>tRNA(Phe) + L-phenylalanine + ATP = L-phenylalanyl-tRNA(Phe) + AMP + diphosphate + H(+)</text>
        <dbReference type="Rhea" id="RHEA:19413"/>
        <dbReference type="Rhea" id="RHEA-COMP:9668"/>
        <dbReference type="Rhea" id="RHEA-COMP:9699"/>
        <dbReference type="ChEBI" id="CHEBI:15378"/>
        <dbReference type="ChEBI" id="CHEBI:30616"/>
        <dbReference type="ChEBI" id="CHEBI:33019"/>
        <dbReference type="ChEBI" id="CHEBI:58095"/>
        <dbReference type="ChEBI" id="CHEBI:78442"/>
        <dbReference type="ChEBI" id="CHEBI:78531"/>
        <dbReference type="ChEBI" id="CHEBI:456215"/>
        <dbReference type="EC" id="6.1.1.20"/>
    </reaction>
</comment>
<comment type="cofactor">
    <cofactor evidence="1">
        <name>Mg(2+)</name>
        <dbReference type="ChEBI" id="CHEBI:18420"/>
    </cofactor>
    <text evidence="1">Binds 2 magnesium ions per tetramer.</text>
</comment>
<comment type="subunit">
    <text evidence="1">Tetramer of two alpha and two beta subunits.</text>
</comment>
<comment type="subcellular location">
    <subcellularLocation>
        <location evidence="1">Cytoplasm</location>
    </subcellularLocation>
</comment>
<comment type="similarity">
    <text evidence="1">Belongs to the class-II aminoacyl-tRNA synthetase family. Phe-tRNA synthetase alpha subunit type 1 subfamily.</text>
</comment>
<gene>
    <name evidence="1" type="primary">pheS</name>
    <name type="ordered locus">TERTU_1459</name>
</gene>
<evidence type="ECO:0000255" key="1">
    <source>
        <dbReference type="HAMAP-Rule" id="MF_00281"/>
    </source>
</evidence>
<keyword id="KW-0030">Aminoacyl-tRNA synthetase</keyword>
<keyword id="KW-0067">ATP-binding</keyword>
<keyword id="KW-0963">Cytoplasm</keyword>
<keyword id="KW-0436">Ligase</keyword>
<keyword id="KW-0460">Magnesium</keyword>
<keyword id="KW-0479">Metal-binding</keyword>
<keyword id="KW-0547">Nucleotide-binding</keyword>
<keyword id="KW-0648">Protein biosynthesis</keyword>
<keyword id="KW-1185">Reference proteome</keyword>
<name>SYFA_TERTT</name>